<comment type="function">
    <text evidence="1">Probably functions as a manganese efflux pump.</text>
</comment>
<comment type="subcellular location">
    <subcellularLocation>
        <location evidence="1">Cell inner membrane</location>
        <topology evidence="1">Multi-pass membrane protein</topology>
    </subcellularLocation>
</comment>
<comment type="similarity">
    <text evidence="1">Belongs to the MntP (TC 9.B.29) family.</text>
</comment>
<dbReference type="EMBL" id="CP001048">
    <property type="protein sequence ID" value="ACC88720.1"/>
    <property type="molecule type" value="Genomic_DNA"/>
</dbReference>
<dbReference type="RefSeq" id="WP_002211065.1">
    <property type="nucleotide sequence ID" value="NZ_CP009780.1"/>
</dbReference>
<dbReference type="GeneID" id="57976826"/>
<dbReference type="KEGG" id="ypb:YPTS_1753"/>
<dbReference type="PATRIC" id="fig|502801.10.peg.1131"/>
<dbReference type="GO" id="GO:0005886">
    <property type="term" value="C:plasma membrane"/>
    <property type="evidence" value="ECO:0007669"/>
    <property type="project" value="UniProtKB-SubCell"/>
</dbReference>
<dbReference type="GO" id="GO:0005384">
    <property type="term" value="F:manganese ion transmembrane transporter activity"/>
    <property type="evidence" value="ECO:0007669"/>
    <property type="project" value="UniProtKB-UniRule"/>
</dbReference>
<dbReference type="HAMAP" id="MF_01521">
    <property type="entry name" value="MntP_pump"/>
    <property type="match status" value="1"/>
</dbReference>
<dbReference type="InterPro" id="IPR003810">
    <property type="entry name" value="Mntp/YtaF"/>
</dbReference>
<dbReference type="InterPro" id="IPR022929">
    <property type="entry name" value="Put_MntP"/>
</dbReference>
<dbReference type="NCBIfam" id="NF008546">
    <property type="entry name" value="PRK11469.1"/>
    <property type="match status" value="1"/>
</dbReference>
<dbReference type="PANTHER" id="PTHR35529">
    <property type="entry name" value="MANGANESE EFFLUX PUMP MNTP-RELATED"/>
    <property type="match status" value="1"/>
</dbReference>
<dbReference type="PANTHER" id="PTHR35529:SF1">
    <property type="entry name" value="MANGANESE EFFLUX PUMP MNTP-RELATED"/>
    <property type="match status" value="1"/>
</dbReference>
<dbReference type="Pfam" id="PF02659">
    <property type="entry name" value="Mntp"/>
    <property type="match status" value="1"/>
</dbReference>
<gene>
    <name evidence="1" type="primary">mntP</name>
    <name type="ordered locus">YPTS_1753</name>
</gene>
<evidence type="ECO:0000255" key="1">
    <source>
        <dbReference type="HAMAP-Rule" id="MF_01521"/>
    </source>
</evidence>
<proteinExistence type="inferred from homology"/>
<sequence>MNLSATIILAFAMSMDAFAASIGKGATLYKPRFREALRTGLIFGVIEAITPLIGWCIGLFASQYIMEWDHWIAFSLLFILGCRMIFEGMKQRVAETEKMRSHSFWVLVTTAIATSLDAMAIGVGLAFLQVDIVHTAMAIGLATMIMATLGMLIGRYIGPLLGKRAEIIGGIVLIGIGFNILYEHMHLTA</sequence>
<name>MNTP_YERPB</name>
<feature type="chain" id="PRO_1000200050" description="Putative manganese efflux pump MntP">
    <location>
        <begin position="1"/>
        <end position="189"/>
    </location>
</feature>
<feature type="transmembrane region" description="Helical" evidence="1">
    <location>
        <begin position="3"/>
        <end position="23"/>
    </location>
</feature>
<feature type="transmembrane region" description="Helical" evidence="1">
    <location>
        <begin position="41"/>
        <end position="61"/>
    </location>
</feature>
<feature type="transmembrane region" description="Helical" evidence="1">
    <location>
        <begin position="65"/>
        <end position="85"/>
    </location>
</feature>
<feature type="transmembrane region" description="Helical" evidence="1">
    <location>
        <begin position="104"/>
        <end position="124"/>
    </location>
</feature>
<feature type="transmembrane region" description="Helical" evidence="1">
    <location>
        <begin position="132"/>
        <end position="152"/>
    </location>
</feature>
<feature type="transmembrane region" description="Helical" evidence="1">
    <location>
        <begin position="167"/>
        <end position="187"/>
    </location>
</feature>
<accession>B2K0F1</accession>
<keyword id="KW-0997">Cell inner membrane</keyword>
<keyword id="KW-1003">Cell membrane</keyword>
<keyword id="KW-0406">Ion transport</keyword>
<keyword id="KW-0464">Manganese</keyword>
<keyword id="KW-0472">Membrane</keyword>
<keyword id="KW-0812">Transmembrane</keyword>
<keyword id="KW-1133">Transmembrane helix</keyword>
<keyword id="KW-0813">Transport</keyword>
<organism>
    <name type="scientific">Yersinia pseudotuberculosis serotype IB (strain PB1/+)</name>
    <dbReference type="NCBI Taxonomy" id="502801"/>
    <lineage>
        <taxon>Bacteria</taxon>
        <taxon>Pseudomonadati</taxon>
        <taxon>Pseudomonadota</taxon>
        <taxon>Gammaproteobacteria</taxon>
        <taxon>Enterobacterales</taxon>
        <taxon>Yersiniaceae</taxon>
        <taxon>Yersinia</taxon>
    </lineage>
</organism>
<protein>
    <recommendedName>
        <fullName evidence="1">Putative manganese efflux pump MntP</fullName>
    </recommendedName>
</protein>
<reference key="1">
    <citation type="submission" date="2008-04" db="EMBL/GenBank/DDBJ databases">
        <title>Complete sequence of Yersinia pseudotuberculosis PB1/+.</title>
        <authorList>
            <person name="Copeland A."/>
            <person name="Lucas S."/>
            <person name="Lapidus A."/>
            <person name="Glavina del Rio T."/>
            <person name="Dalin E."/>
            <person name="Tice H."/>
            <person name="Bruce D."/>
            <person name="Goodwin L."/>
            <person name="Pitluck S."/>
            <person name="Munk A.C."/>
            <person name="Brettin T."/>
            <person name="Detter J.C."/>
            <person name="Han C."/>
            <person name="Tapia R."/>
            <person name="Schmutz J."/>
            <person name="Larimer F."/>
            <person name="Land M."/>
            <person name="Hauser L."/>
            <person name="Challacombe J.F."/>
            <person name="Green L."/>
            <person name="Lindler L.E."/>
            <person name="Nikolich M.P."/>
            <person name="Richardson P."/>
        </authorList>
    </citation>
    <scope>NUCLEOTIDE SEQUENCE [LARGE SCALE GENOMIC DNA]</scope>
    <source>
        <strain>PB1/+</strain>
    </source>
</reference>